<proteinExistence type="inferred from homology"/>
<protein>
    <recommendedName>
        <fullName>Uncharacterized protein MT1405</fullName>
    </recommendedName>
</protein>
<accession>P9WM02</accession>
<accession>L0T9E5</accession>
<accession>P64831</accession>
<accession>Q11030</accession>
<keyword id="KW-1185">Reference proteome</keyword>
<keyword id="KW-0732">Signal</keyword>
<dbReference type="EMBL" id="AE000516">
    <property type="protein sequence ID" value="AAK45668.1"/>
    <property type="molecule type" value="Genomic_DNA"/>
</dbReference>
<dbReference type="PIR" id="G70741">
    <property type="entry name" value="G70741"/>
</dbReference>
<dbReference type="RefSeq" id="WP_003898842.1">
    <property type="nucleotide sequence ID" value="NZ_KK341227.1"/>
</dbReference>
<dbReference type="SMR" id="P9WM02"/>
<dbReference type="KEGG" id="mtc:MT1405"/>
<dbReference type="PATRIC" id="fig|83331.31.peg.1512"/>
<dbReference type="HOGENOM" id="CLU_027853_5_1_11"/>
<dbReference type="Proteomes" id="UP000001020">
    <property type="component" value="Chromosome"/>
</dbReference>
<dbReference type="GO" id="GO:0016705">
    <property type="term" value="F:oxidoreductase activity, acting on paired donors, with incorporation or reduction of molecular oxygen"/>
    <property type="evidence" value="ECO:0007669"/>
    <property type="project" value="InterPro"/>
</dbReference>
<dbReference type="CDD" id="cd01097">
    <property type="entry name" value="Tetrahydromethanopterin_reductase"/>
    <property type="match status" value="1"/>
</dbReference>
<dbReference type="Gene3D" id="3.20.20.30">
    <property type="entry name" value="Luciferase-like domain"/>
    <property type="match status" value="1"/>
</dbReference>
<dbReference type="InterPro" id="IPR050564">
    <property type="entry name" value="F420-G6PD/mer"/>
</dbReference>
<dbReference type="InterPro" id="IPR019919">
    <property type="entry name" value="Lucif-like_OxRdtase_MSMEG_2256"/>
</dbReference>
<dbReference type="InterPro" id="IPR011251">
    <property type="entry name" value="Luciferase-like_dom"/>
</dbReference>
<dbReference type="InterPro" id="IPR036661">
    <property type="entry name" value="Luciferase-like_sf"/>
</dbReference>
<dbReference type="NCBIfam" id="TIGR03617">
    <property type="entry name" value="F420_MSMEG_2256"/>
    <property type="match status" value="1"/>
</dbReference>
<dbReference type="PANTHER" id="PTHR43244">
    <property type="match status" value="1"/>
</dbReference>
<dbReference type="PANTHER" id="PTHR43244:SF2">
    <property type="entry name" value="CONSERVED HYPOTHETICAL ALANINE AND PROLINE-RICH PROTEIN"/>
    <property type="match status" value="1"/>
</dbReference>
<dbReference type="Pfam" id="PF00296">
    <property type="entry name" value="Bac_luciferase"/>
    <property type="match status" value="1"/>
</dbReference>
<dbReference type="SUPFAM" id="SSF51679">
    <property type="entry name" value="Bacterial luciferase-like"/>
    <property type="match status" value="1"/>
</dbReference>
<sequence>MGGARRLKLDGSIPNQLARAADAAVALERNGFDGGWTAEASHDPFLPLLLAAEHTSRLELGTNIAVAFARNPMIVANVGWDLQTYSKGRLILGLGTQIRPHIEKRFSMPWGHPARRMREFVAALRAIWLAWQDGTKLCFEGEFYTHKIMTPMFTPEPQPYPVPRVFIAAVGEAMTEMCGEVADGHLGHPMVSKRYLTEVSVPALLRGLARSGRDRSAFEVSCEVMVATGADDAELAAACTATRKQIAFYGSTPAYRKVLEQHGWGDLHPELHRLSKLGEWEAMGGLIDDEMLGAFAVVGPVDTIAGALRNRCEGVVDRVLPIFMAASQECINAALQDFRR</sequence>
<reference key="1">
    <citation type="journal article" date="2002" name="J. Bacteriol.">
        <title>Whole-genome comparison of Mycobacterium tuberculosis clinical and laboratory strains.</title>
        <authorList>
            <person name="Fleischmann R.D."/>
            <person name="Alland D."/>
            <person name="Eisen J.A."/>
            <person name="Carpenter L."/>
            <person name="White O."/>
            <person name="Peterson J.D."/>
            <person name="DeBoy R.T."/>
            <person name="Dodson R.J."/>
            <person name="Gwinn M.L."/>
            <person name="Haft D.H."/>
            <person name="Hickey E.K."/>
            <person name="Kolonay J.F."/>
            <person name="Nelson W.C."/>
            <person name="Umayam L.A."/>
            <person name="Ermolaeva M.D."/>
            <person name="Salzberg S.L."/>
            <person name="Delcher A."/>
            <person name="Utterback T.R."/>
            <person name="Weidman J.F."/>
            <person name="Khouri H.M."/>
            <person name="Gill J."/>
            <person name="Mikula A."/>
            <person name="Bishai W."/>
            <person name="Jacobs W.R. Jr."/>
            <person name="Venter J.C."/>
            <person name="Fraser C.M."/>
        </authorList>
    </citation>
    <scope>NUCLEOTIDE SEQUENCE [LARGE SCALE GENOMIC DNA]</scope>
    <source>
        <strain>CDC 1551 / Oshkosh</strain>
    </source>
</reference>
<gene>
    <name type="ordered locus">MT1405</name>
</gene>
<evidence type="ECO:0000255" key="1"/>
<feature type="signal peptide" evidence="1">
    <location>
        <begin position="1"/>
        <end position="20"/>
    </location>
</feature>
<feature type="chain" id="PRO_0000427389" description="Uncharacterized protein MT1405">
    <location>
        <begin position="21"/>
        <end position="340"/>
    </location>
</feature>
<name>Y1360_MYCTO</name>
<organism>
    <name type="scientific">Mycobacterium tuberculosis (strain CDC 1551 / Oshkosh)</name>
    <dbReference type="NCBI Taxonomy" id="83331"/>
    <lineage>
        <taxon>Bacteria</taxon>
        <taxon>Bacillati</taxon>
        <taxon>Actinomycetota</taxon>
        <taxon>Actinomycetes</taxon>
        <taxon>Mycobacteriales</taxon>
        <taxon>Mycobacteriaceae</taxon>
        <taxon>Mycobacterium</taxon>
        <taxon>Mycobacterium tuberculosis complex</taxon>
    </lineage>
</organism>